<feature type="signal peptide" evidence="2">
    <location>
        <begin position="1"/>
        <end position="21"/>
    </location>
</feature>
<feature type="chain" id="PRO_0000407494" description="Vacuolar protein sorting/targeting protein 10">
    <location>
        <begin position="22"/>
        <end position="1497"/>
    </location>
</feature>
<feature type="topological domain" description="Lumenal" evidence="2">
    <location>
        <begin position="22"/>
        <end position="1361"/>
    </location>
</feature>
<feature type="transmembrane region" description="Helical" evidence="2">
    <location>
        <begin position="1362"/>
        <end position="1382"/>
    </location>
</feature>
<feature type="topological domain" description="Cytoplasmic" evidence="2">
    <location>
        <begin position="1383"/>
        <end position="1408"/>
    </location>
</feature>
<feature type="transmembrane region" description="Helical" evidence="2">
    <location>
        <begin position="1409"/>
        <end position="1429"/>
    </location>
</feature>
<feature type="topological domain" description="Lumenal" evidence="2">
    <location>
        <begin position="1430"/>
        <end position="1497"/>
    </location>
</feature>
<feature type="repeat" description="BNR 1">
    <location>
        <begin position="61"/>
        <end position="71"/>
    </location>
</feature>
<feature type="repeat" description="BNR 2">
    <location>
        <begin position="377"/>
        <end position="386"/>
    </location>
</feature>
<feature type="repeat" description="BNR 3">
    <location>
        <begin position="437"/>
        <end position="447"/>
    </location>
</feature>
<feature type="repeat" description="BNR 4">
    <location>
        <begin position="479"/>
        <end position="489"/>
    </location>
</feature>
<feature type="repeat" description="BNR 5">
    <location>
        <begin position="721"/>
        <end position="731"/>
    </location>
</feature>
<feature type="repeat" description="BNR 6">
    <location>
        <begin position="1105"/>
        <end position="1115"/>
    </location>
</feature>
<feature type="repeat" description="BNR 7">
    <location>
        <begin position="1147"/>
        <end position="1156"/>
    </location>
</feature>
<feature type="region of interest" description="Disordered" evidence="3">
    <location>
        <begin position="1474"/>
        <end position="1497"/>
    </location>
</feature>
<feature type="compositionally biased region" description="Acidic residues" evidence="3">
    <location>
        <begin position="1474"/>
        <end position="1491"/>
    </location>
</feature>
<feature type="glycosylation site" description="N-linked (GlcNAc...) asparagine" evidence="2">
    <location>
        <position position="321"/>
    </location>
</feature>
<feature type="glycosylation site" description="N-linked (GlcNAc...) asparagine" evidence="2">
    <location>
        <position position="970"/>
    </location>
</feature>
<gene>
    <name type="primary">VPS10</name>
    <name type="ORF">HCBG_03728</name>
</gene>
<accession>C0NKP8</accession>
<comment type="function">
    <text evidence="1">Functions as a sorting receptor in the Golgi compartment required for the intracellular sorting and delivery of soluble vacuolar proteins, like carboxypeptidase Y (CPY) and proteinase A. Executes multiple rounds of sorting by cycling between the late Golgi and a prevacuolar endosome-like compartment (By similarity).</text>
</comment>
<comment type="subcellular location">
    <subcellularLocation>
        <location evidence="1">Golgi apparatus</location>
        <location evidence="1">trans-Golgi network membrane</location>
        <topology evidence="1">Multi-pass membrane protein</topology>
    </subcellularLocation>
    <subcellularLocation>
        <location evidence="1">Prevacuolar compartment membrane</location>
        <topology evidence="1">Multi-pass membrane protein</topology>
    </subcellularLocation>
    <text evidence="1">Cycles between the Golgi apparatus and the prevacuolar compartment.</text>
</comment>
<comment type="similarity">
    <text evidence="4">Belongs to the VPS10-related sortilin family.</text>
</comment>
<sequence>MILRRLLLAGSLLLATAFTSAKKADGPKISVTKFKDEPVNLFYFDDSDTVMFQDGKNGDVYVSRDAGANWDIVDVSGMRGKAWSLLPHPTDRTKAYIMSKGGTHWVTEDQAKSWREFTVDAELSRYEYPLVFHGKDSNRVMLLGHKCNGLDCKERTYYTTDGFKTVHLLMENGRHCAWAVSTPTFGEGLDLPKEVNDRIFCVVSGLHSSWAEANRLLYSDRFFKDEQGTEVPLDNGRAVSGVIRTASVQKYILAATKSARTNELALFVTDDASTWHRTEFDGHRVEEDAYTILESTSYSLQVDVVSTYSSTIGTLFTSNSNGTYFTRNIEHTNRNMYGFVDFEKISSIQGIILVNTVKNWEDVEKSNGVQKKVISKISFDDGRTFQPLKVGKHDLHLHSVTDATNSGRVFSSPAPGLVMGVGNTGGHLKDYLDGDLFVSDDAGINWRKALDDAHKYEFGDQGSVIVAVFDEGRTDKISYSLDHGKNWHKASLPDGVQIRAKVLTTAPGSTTLKFLLLGSAKADIGMEYYIISIDFAEMEERTCEEKDFENWPARLNEKNEPDCLMGHKQFYRRRKAQADCFIKKKFEEPAPEFERCKCTEEDFECDFNFVRGEDGKSCIPSRSLIAPEGVCKNPDDKFTGSSGFRLIPGNVCIREGGVDLDKQTERVCSETFKNPPAGQIVVEKSFFTADYYKDYFYLERKESSKGEDETVIMITSEQQIFLSRDHGKKWKQILEEEKITRIEPHRFFDDVAYFLTNNGDGWYTLDRGDTFRKFKAPLPPNQDKLPVLSFHPDRRDWLIWTGADECNGNGGNCHSVAYYTTNLGGEWHFLMRYVRRCEFISRDARGSSDKLVFCEQFENENPSNKHLQLLSTEDWFAEKRLHYSNILDFATMQEFIIVAIRGENSQDSLRIGVSIDGKTFADAELPANVQIPIQRAYTVLESRTHAAFLHVTINNIEDHEYGSIIKSNSNGTSYVLSLSAVNRNSRGYADFEKMQGLEGVAMANVVGNVADVENGAAKKFRTMITHNDGAEWTLMRPPDKDSEGRSYACSTKGGKPTDACALHLHSYTERADPRDTYSSPSAVGIMIGTGNVGDYLSLKSKADTFITRDAGITWEEVKKGKYQWEFGDSGSIIVLVPESTPTKTLLYSLDEGRSWKDFEFSEVEMQIQDISTVPSDTSRNFLLWGKEVGQGKKPGLATVNIDFSGLKERSKQCVLDEKKPEADDYYLWEPKHPLQPNGCLFGHRAKYHRKRPDKDCYNGRELQHLDSIGDICECTRSDYECDYNYEPQSDGSCARVAGLEPLDPKLVCTENPKAVEWYEPTGYRRIPLTKCQGGKQLNHIVAHPCPNKEEEFFKKHPRLRGIGLFFVILIPICLAATAGYYVYNHWDGKFGRIRLGETGSGGLFDRDSLLVSIPVSMVAGVVAVITALPLLVSSLWRSVSGYVRVPGGASSRRPYSSRDSFAARRSDYVGVVEDEDELLGTDDFDDDEEGDERNGQV</sequence>
<organism>
    <name type="scientific">Ajellomyces capsulatus (strain G186AR / H82 / ATCC MYA-2454 / RMSCC 2432)</name>
    <name type="common">Darling's disease fungus</name>
    <name type="synonym">Histoplasma capsulatum</name>
    <dbReference type="NCBI Taxonomy" id="447093"/>
    <lineage>
        <taxon>Eukaryota</taxon>
        <taxon>Fungi</taxon>
        <taxon>Dikarya</taxon>
        <taxon>Ascomycota</taxon>
        <taxon>Pezizomycotina</taxon>
        <taxon>Eurotiomycetes</taxon>
        <taxon>Eurotiomycetidae</taxon>
        <taxon>Onygenales</taxon>
        <taxon>Ajellomycetaceae</taxon>
        <taxon>Histoplasma</taxon>
    </lineage>
</organism>
<proteinExistence type="inferred from homology"/>
<protein>
    <recommendedName>
        <fullName>Vacuolar protein sorting/targeting protein 10</fullName>
    </recommendedName>
    <alternativeName>
        <fullName>Carboxypeptidase Y receptor</fullName>
        <shortName>CPY receptor</shortName>
    </alternativeName>
    <alternativeName>
        <fullName>Sortilin VPS10</fullName>
    </alternativeName>
    <alternativeName>
        <fullName>Vacuolar carboxypeptidase sorting receptor VPS10</fullName>
    </alternativeName>
</protein>
<name>VPS10_AJECG</name>
<reference key="1">
    <citation type="submission" date="2009-02" db="EMBL/GenBank/DDBJ databases">
        <title>The genome sequence of Ajellomyces capsulatus strain G186AR.</title>
        <authorList>
            <person name="Champion M."/>
            <person name="Cuomo C.A."/>
            <person name="Ma L.-J."/>
            <person name="Henn M.R."/>
            <person name="Sil A."/>
            <person name="Goldman B."/>
            <person name="Young S.K."/>
            <person name="Kodira C.D."/>
            <person name="Zeng Q."/>
            <person name="Koehrsen M."/>
            <person name="Alvarado L."/>
            <person name="Berlin A."/>
            <person name="Borenstein D."/>
            <person name="Chen Z."/>
            <person name="Engels R."/>
            <person name="Freedman E."/>
            <person name="Gellesch M."/>
            <person name="Goldberg J."/>
            <person name="Griggs A."/>
            <person name="Gujja S."/>
            <person name="Heiman D."/>
            <person name="Hepburn T."/>
            <person name="Howarth C."/>
            <person name="Jen D."/>
            <person name="Larson L."/>
            <person name="Lewis B."/>
            <person name="Mehta T."/>
            <person name="Park D."/>
            <person name="Pearson M."/>
            <person name="Roberts A."/>
            <person name="Saif S."/>
            <person name="Shea T."/>
            <person name="Shenoy N."/>
            <person name="Sisk P."/>
            <person name="Stolte C."/>
            <person name="Sykes S."/>
            <person name="Walk T."/>
            <person name="White J."/>
            <person name="Yandava C."/>
            <person name="Klein B."/>
            <person name="McEwen J.G."/>
            <person name="Puccia R."/>
            <person name="Goldman G.H."/>
            <person name="Felipe M.S."/>
            <person name="Nino-Vega G."/>
            <person name="San-Blas G."/>
            <person name="Taylor J."/>
            <person name="Mendoza L."/>
            <person name="Galagan J.E."/>
            <person name="Nusbaum C."/>
            <person name="Birren B.W."/>
        </authorList>
    </citation>
    <scope>NUCLEOTIDE SEQUENCE [LARGE SCALE GENOMIC DNA]</scope>
    <source>
        <strain>G186AR / H82 / ATCC MYA-2454 / RMSCC 2432</strain>
    </source>
</reference>
<dbReference type="EMBL" id="GG663366">
    <property type="protein sequence ID" value="EEH08439.1"/>
    <property type="molecule type" value="Genomic_DNA"/>
</dbReference>
<dbReference type="SMR" id="C0NKP8"/>
<dbReference type="FunCoup" id="C0NKP8">
    <property type="interactions" value="186"/>
</dbReference>
<dbReference type="STRING" id="447093.C0NKP8"/>
<dbReference type="GlyCosmos" id="C0NKP8">
    <property type="glycosylation" value="2 sites, No reported glycans"/>
</dbReference>
<dbReference type="VEuPathDB" id="FungiDB:I7I50_07427"/>
<dbReference type="HOGENOM" id="CLU_000700_0_0_1"/>
<dbReference type="InParanoid" id="C0NKP8"/>
<dbReference type="Proteomes" id="UP000001631">
    <property type="component" value="Unassembled WGS sequence"/>
</dbReference>
<dbReference type="GO" id="GO:0005829">
    <property type="term" value="C:cytosol"/>
    <property type="evidence" value="ECO:0007669"/>
    <property type="project" value="GOC"/>
</dbReference>
<dbReference type="GO" id="GO:0005794">
    <property type="term" value="C:Golgi apparatus"/>
    <property type="evidence" value="ECO:0007669"/>
    <property type="project" value="UniProtKB-SubCell"/>
</dbReference>
<dbReference type="GO" id="GO:0016020">
    <property type="term" value="C:membrane"/>
    <property type="evidence" value="ECO:0007669"/>
    <property type="project" value="UniProtKB-KW"/>
</dbReference>
<dbReference type="GO" id="GO:0006895">
    <property type="term" value="P:Golgi to endosome transport"/>
    <property type="evidence" value="ECO:0007669"/>
    <property type="project" value="TreeGrafter"/>
</dbReference>
<dbReference type="GO" id="GO:0006896">
    <property type="term" value="P:Golgi to vacuole transport"/>
    <property type="evidence" value="ECO:0007669"/>
    <property type="project" value="TreeGrafter"/>
</dbReference>
<dbReference type="GO" id="GO:0006623">
    <property type="term" value="P:protein targeting to vacuole"/>
    <property type="evidence" value="ECO:0007669"/>
    <property type="project" value="TreeGrafter"/>
</dbReference>
<dbReference type="CDD" id="cd15482">
    <property type="entry name" value="Sialidase_non-viral"/>
    <property type="match status" value="1"/>
</dbReference>
<dbReference type="FunFam" id="3.30.60.270:FF:000005">
    <property type="entry name" value="Sortilin"/>
    <property type="match status" value="2"/>
</dbReference>
<dbReference type="FunFam" id="2.10.70.80:FF:000001">
    <property type="entry name" value="Sortilin-related VPS10 domain-containing receptor 1"/>
    <property type="match status" value="1"/>
</dbReference>
<dbReference type="Gene3D" id="2.10.70.80">
    <property type="match status" value="2"/>
</dbReference>
<dbReference type="Gene3D" id="3.30.60.270">
    <property type="match status" value="2"/>
</dbReference>
<dbReference type="Gene3D" id="2.130.10.10">
    <property type="entry name" value="YVTN repeat-like/Quinoprotein amine dehydrogenase"/>
    <property type="match status" value="3"/>
</dbReference>
<dbReference type="InterPro" id="IPR031777">
    <property type="entry name" value="Sortilin_C"/>
</dbReference>
<dbReference type="InterPro" id="IPR031778">
    <property type="entry name" value="Sortilin_N"/>
</dbReference>
<dbReference type="InterPro" id="IPR006581">
    <property type="entry name" value="VPS10"/>
</dbReference>
<dbReference type="InterPro" id="IPR050310">
    <property type="entry name" value="VPS10-sortilin"/>
</dbReference>
<dbReference type="InterPro" id="IPR015943">
    <property type="entry name" value="WD40/YVTN_repeat-like_dom_sf"/>
</dbReference>
<dbReference type="PANTHER" id="PTHR12106">
    <property type="entry name" value="SORTILIN RELATED"/>
    <property type="match status" value="1"/>
</dbReference>
<dbReference type="PANTHER" id="PTHR12106:SF27">
    <property type="entry name" value="SORTILIN-RELATED RECEPTOR"/>
    <property type="match status" value="1"/>
</dbReference>
<dbReference type="Pfam" id="PF15902">
    <property type="entry name" value="Sortilin-Vps10"/>
    <property type="match status" value="2"/>
</dbReference>
<dbReference type="Pfam" id="PF15901">
    <property type="entry name" value="Sortilin_C"/>
    <property type="match status" value="2"/>
</dbReference>
<dbReference type="SMART" id="SM00602">
    <property type="entry name" value="VPS10"/>
    <property type="match status" value="2"/>
</dbReference>
<dbReference type="SUPFAM" id="SSF110296">
    <property type="entry name" value="Oligoxyloglucan reducing end-specific cellobiohydrolase"/>
    <property type="match status" value="2"/>
</dbReference>
<keyword id="KW-0325">Glycoprotein</keyword>
<keyword id="KW-0333">Golgi apparatus</keyword>
<keyword id="KW-0472">Membrane</keyword>
<keyword id="KW-0653">Protein transport</keyword>
<keyword id="KW-0675">Receptor</keyword>
<keyword id="KW-1185">Reference proteome</keyword>
<keyword id="KW-0677">Repeat</keyword>
<keyword id="KW-0732">Signal</keyword>
<keyword id="KW-0812">Transmembrane</keyword>
<keyword id="KW-1133">Transmembrane helix</keyword>
<keyword id="KW-0813">Transport</keyword>
<evidence type="ECO:0000250" key="1"/>
<evidence type="ECO:0000255" key="2"/>
<evidence type="ECO:0000256" key="3">
    <source>
        <dbReference type="SAM" id="MobiDB-lite"/>
    </source>
</evidence>
<evidence type="ECO:0000305" key="4"/>